<accession>Q9PNC3</accession>
<accession>Q0P984</accession>
<proteinExistence type="inferred from homology"/>
<name>Y1172_CAMJE</name>
<reference key="1">
    <citation type="journal article" date="2000" name="Nature">
        <title>The genome sequence of the food-borne pathogen Campylobacter jejuni reveals hypervariable sequences.</title>
        <authorList>
            <person name="Parkhill J."/>
            <person name="Wren B.W."/>
            <person name="Mungall K.L."/>
            <person name="Ketley J.M."/>
            <person name="Churcher C.M."/>
            <person name="Basham D."/>
            <person name="Chillingworth T."/>
            <person name="Davies R.M."/>
            <person name="Feltwell T."/>
            <person name="Holroyd S."/>
            <person name="Jagels K."/>
            <person name="Karlyshev A.V."/>
            <person name="Moule S."/>
            <person name="Pallen M.J."/>
            <person name="Penn C.W."/>
            <person name="Quail M.A."/>
            <person name="Rajandream M.A."/>
            <person name="Rutherford K.M."/>
            <person name="van Vliet A.H.M."/>
            <person name="Whitehead S."/>
            <person name="Barrell B.G."/>
        </authorList>
    </citation>
    <scope>NUCLEOTIDE SEQUENCE [LARGE SCALE GENOMIC DNA]</scope>
    <source>
        <strain>ATCC 700819 / NCTC 11168</strain>
    </source>
</reference>
<evidence type="ECO:0000255" key="1">
    <source>
        <dbReference type="HAMAP-Rule" id="MF_00693"/>
    </source>
</evidence>
<keyword id="KW-0963">Cytoplasm</keyword>
<keyword id="KW-0238">DNA-binding</keyword>
<keyword id="KW-1185">Reference proteome</keyword>
<keyword id="KW-0804">Transcription</keyword>
<keyword id="KW-0805">Transcription regulation</keyword>
<feature type="chain" id="PRO_0000175779" description="Probable transcriptional regulatory protein Cj1172c">
    <location>
        <begin position="1"/>
        <end position="235"/>
    </location>
</feature>
<sequence>MGRAFEYRRASKEARWDKMSKLFPKLAKAIQVAAKEGGTDPDMNPKLRSAIATAKANNMPKDNIDAAIKRASGKDSADIKNIHYEGKAAHGALVIVECMSDNPTRTVANVKAIFSKNGGEVLQNGSLGFMFTRKAVFHLEKFAGDLEELELDLIDAGLEELEQNEEELVISGDYTAFGELSSAIEAKGLVLKKAGLEYIPNNPVSFSEEQLSDIEKLLDKLEDDDDVQAVYTNID</sequence>
<organism>
    <name type="scientific">Campylobacter jejuni subsp. jejuni serotype O:2 (strain ATCC 700819 / NCTC 11168)</name>
    <dbReference type="NCBI Taxonomy" id="192222"/>
    <lineage>
        <taxon>Bacteria</taxon>
        <taxon>Pseudomonadati</taxon>
        <taxon>Campylobacterota</taxon>
        <taxon>Epsilonproteobacteria</taxon>
        <taxon>Campylobacterales</taxon>
        <taxon>Campylobacteraceae</taxon>
        <taxon>Campylobacter</taxon>
    </lineage>
</organism>
<protein>
    <recommendedName>
        <fullName evidence="1">Probable transcriptional regulatory protein Cj1172c</fullName>
    </recommendedName>
</protein>
<gene>
    <name type="ordered locus">Cj1172c</name>
</gene>
<comment type="subcellular location">
    <subcellularLocation>
        <location evidence="1">Cytoplasm</location>
    </subcellularLocation>
</comment>
<comment type="similarity">
    <text evidence="1">Belongs to the TACO1 family.</text>
</comment>
<dbReference type="EMBL" id="AL111168">
    <property type="protein sequence ID" value="CAL35287.1"/>
    <property type="molecule type" value="Genomic_DNA"/>
</dbReference>
<dbReference type="PIR" id="F81322">
    <property type="entry name" value="F81322"/>
</dbReference>
<dbReference type="RefSeq" id="WP_002780603.1">
    <property type="nucleotide sequence ID" value="NZ_SZUC01000001.1"/>
</dbReference>
<dbReference type="RefSeq" id="YP_002344563.1">
    <property type="nucleotide sequence ID" value="NC_002163.1"/>
</dbReference>
<dbReference type="SMR" id="Q9PNC3"/>
<dbReference type="IntAct" id="Q9PNC3">
    <property type="interactions" value="10"/>
</dbReference>
<dbReference type="STRING" id="192222.Cj1172c"/>
<dbReference type="PaxDb" id="192222-Cj1172c"/>
<dbReference type="EnsemblBacteria" id="CAL35287">
    <property type="protein sequence ID" value="CAL35287"/>
    <property type="gene ID" value="Cj1172c"/>
</dbReference>
<dbReference type="GeneID" id="905462"/>
<dbReference type="KEGG" id="cje:Cj1172c"/>
<dbReference type="PATRIC" id="fig|192222.6.peg.1153"/>
<dbReference type="eggNOG" id="COG0217">
    <property type="taxonomic scope" value="Bacteria"/>
</dbReference>
<dbReference type="HOGENOM" id="CLU_062974_2_2_7"/>
<dbReference type="OrthoDB" id="9781053at2"/>
<dbReference type="PRO" id="PR:Q9PNC3"/>
<dbReference type="Proteomes" id="UP000000799">
    <property type="component" value="Chromosome"/>
</dbReference>
<dbReference type="GO" id="GO:0005829">
    <property type="term" value="C:cytosol"/>
    <property type="evidence" value="ECO:0007669"/>
    <property type="project" value="TreeGrafter"/>
</dbReference>
<dbReference type="GO" id="GO:0003677">
    <property type="term" value="F:DNA binding"/>
    <property type="evidence" value="ECO:0007669"/>
    <property type="project" value="UniProtKB-UniRule"/>
</dbReference>
<dbReference type="GO" id="GO:0006355">
    <property type="term" value="P:regulation of DNA-templated transcription"/>
    <property type="evidence" value="ECO:0007669"/>
    <property type="project" value="UniProtKB-UniRule"/>
</dbReference>
<dbReference type="FunFam" id="1.10.10.200:FF:000004">
    <property type="entry name" value="Probable transcriptional regulatory protein BSBG_02618"/>
    <property type="match status" value="1"/>
</dbReference>
<dbReference type="Gene3D" id="1.10.10.200">
    <property type="match status" value="1"/>
</dbReference>
<dbReference type="Gene3D" id="3.30.70.980">
    <property type="match status" value="2"/>
</dbReference>
<dbReference type="HAMAP" id="MF_00693">
    <property type="entry name" value="Transcrip_reg_TACO1"/>
    <property type="match status" value="1"/>
</dbReference>
<dbReference type="InterPro" id="IPR017856">
    <property type="entry name" value="Integrase-like_N"/>
</dbReference>
<dbReference type="InterPro" id="IPR048300">
    <property type="entry name" value="TACO1_YebC-like_2nd/3rd_dom"/>
</dbReference>
<dbReference type="InterPro" id="IPR049083">
    <property type="entry name" value="TACO1_YebC_N"/>
</dbReference>
<dbReference type="InterPro" id="IPR002876">
    <property type="entry name" value="Transcrip_reg_TACO1-like"/>
</dbReference>
<dbReference type="InterPro" id="IPR026564">
    <property type="entry name" value="Transcrip_reg_TACO1-like_dom3"/>
</dbReference>
<dbReference type="InterPro" id="IPR029072">
    <property type="entry name" value="YebC-like"/>
</dbReference>
<dbReference type="NCBIfam" id="NF009044">
    <property type="entry name" value="PRK12378.1"/>
    <property type="match status" value="1"/>
</dbReference>
<dbReference type="NCBIfam" id="TIGR01033">
    <property type="entry name" value="YebC/PmpR family DNA-binding transcriptional regulator"/>
    <property type="match status" value="1"/>
</dbReference>
<dbReference type="PANTHER" id="PTHR12532:SF6">
    <property type="entry name" value="TRANSCRIPTIONAL REGULATORY PROTEIN YEBC-RELATED"/>
    <property type="match status" value="1"/>
</dbReference>
<dbReference type="PANTHER" id="PTHR12532">
    <property type="entry name" value="TRANSLATIONAL ACTIVATOR OF CYTOCHROME C OXIDASE 1"/>
    <property type="match status" value="1"/>
</dbReference>
<dbReference type="Pfam" id="PF20772">
    <property type="entry name" value="TACO1_YebC_N"/>
    <property type="match status" value="1"/>
</dbReference>
<dbReference type="Pfam" id="PF01709">
    <property type="entry name" value="Transcrip_reg"/>
    <property type="match status" value="1"/>
</dbReference>
<dbReference type="SUPFAM" id="SSF75625">
    <property type="entry name" value="YebC-like"/>
    <property type="match status" value="1"/>
</dbReference>